<name>Y1737_BURA4</name>
<keyword id="KW-0963">Cytoplasm</keyword>
<keyword id="KW-0238">DNA-binding</keyword>
<sequence>MLKGNLAGLMKQAQQMQENMKKMQEQLAQIEVEGQSGAGLVKVTMTCRNEVRRVAIDPSLLADDKDMLEDLVAAAFNDAVRKAEATSQEKMSGMTSGLPLPPGFKLPF</sequence>
<organism>
    <name type="scientific">Burkholderia ambifaria (strain MC40-6)</name>
    <dbReference type="NCBI Taxonomy" id="398577"/>
    <lineage>
        <taxon>Bacteria</taxon>
        <taxon>Pseudomonadati</taxon>
        <taxon>Pseudomonadota</taxon>
        <taxon>Betaproteobacteria</taxon>
        <taxon>Burkholderiales</taxon>
        <taxon>Burkholderiaceae</taxon>
        <taxon>Burkholderia</taxon>
        <taxon>Burkholderia cepacia complex</taxon>
    </lineage>
</organism>
<comment type="function">
    <text evidence="1">Binds to DNA and alters its conformation. May be involved in regulation of gene expression, nucleoid organization and DNA protection.</text>
</comment>
<comment type="subunit">
    <text evidence="1">Homodimer.</text>
</comment>
<comment type="subcellular location">
    <subcellularLocation>
        <location evidence="1">Cytoplasm</location>
        <location evidence="1">Nucleoid</location>
    </subcellularLocation>
</comment>
<comment type="similarity">
    <text evidence="1">Belongs to the YbaB/EbfC family.</text>
</comment>
<evidence type="ECO:0000255" key="1">
    <source>
        <dbReference type="HAMAP-Rule" id="MF_00274"/>
    </source>
</evidence>
<evidence type="ECO:0000256" key="2">
    <source>
        <dbReference type="SAM" id="MobiDB-lite"/>
    </source>
</evidence>
<protein>
    <recommendedName>
        <fullName evidence="1">Nucleoid-associated protein BamMC406_1737</fullName>
    </recommendedName>
</protein>
<accession>B1YRE8</accession>
<gene>
    <name type="ordered locus">BamMC406_1737</name>
</gene>
<feature type="chain" id="PRO_1000114589" description="Nucleoid-associated protein BamMC406_1737">
    <location>
        <begin position="1"/>
        <end position="108"/>
    </location>
</feature>
<feature type="region of interest" description="Disordered" evidence="2">
    <location>
        <begin position="85"/>
        <end position="108"/>
    </location>
</feature>
<feature type="compositionally biased region" description="Polar residues" evidence="2">
    <location>
        <begin position="85"/>
        <end position="95"/>
    </location>
</feature>
<feature type="compositionally biased region" description="Pro residues" evidence="2">
    <location>
        <begin position="99"/>
        <end position="108"/>
    </location>
</feature>
<proteinExistence type="inferred from homology"/>
<dbReference type="EMBL" id="CP001025">
    <property type="protein sequence ID" value="ACB64222.1"/>
    <property type="molecule type" value="Genomic_DNA"/>
</dbReference>
<dbReference type="RefSeq" id="WP_006755698.1">
    <property type="nucleotide sequence ID" value="NC_010551.1"/>
</dbReference>
<dbReference type="SMR" id="B1YRE8"/>
<dbReference type="KEGG" id="bac:BamMC406_1737"/>
<dbReference type="HOGENOM" id="CLU_140930_0_0_4"/>
<dbReference type="OrthoDB" id="9808738at2"/>
<dbReference type="Proteomes" id="UP000001680">
    <property type="component" value="Chromosome 1"/>
</dbReference>
<dbReference type="GO" id="GO:0043590">
    <property type="term" value="C:bacterial nucleoid"/>
    <property type="evidence" value="ECO:0007669"/>
    <property type="project" value="UniProtKB-UniRule"/>
</dbReference>
<dbReference type="GO" id="GO:0005829">
    <property type="term" value="C:cytosol"/>
    <property type="evidence" value="ECO:0007669"/>
    <property type="project" value="TreeGrafter"/>
</dbReference>
<dbReference type="GO" id="GO:0003677">
    <property type="term" value="F:DNA binding"/>
    <property type="evidence" value="ECO:0007669"/>
    <property type="project" value="UniProtKB-UniRule"/>
</dbReference>
<dbReference type="FunFam" id="3.30.1310.10:FF:000001">
    <property type="entry name" value="Nucleoid-associated protein YbaB"/>
    <property type="match status" value="1"/>
</dbReference>
<dbReference type="Gene3D" id="3.30.1310.10">
    <property type="entry name" value="Nucleoid-associated protein YbaB-like domain"/>
    <property type="match status" value="1"/>
</dbReference>
<dbReference type="HAMAP" id="MF_00274">
    <property type="entry name" value="DNA_YbaB_EbfC"/>
    <property type="match status" value="1"/>
</dbReference>
<dbReference type="InterPro" id="IPR036894">
    <property type="entry name" value="YbaB-like_sf"/>
</dbReference>
<dbReference type="InterPro" id="IPR004401">
    <property type="entry name" value="YbaB/EbfC"/>
</dbReference>
<dbReference type="NCBIfam" id="TIGR00103">
    <property type="entry name" value="DNA_YbaB_EbfC"/>
    <property type="match status" value="1"/>
</dbReference>
<dbReference type="PANTHER" id="PTHR33449">
    <property type="entry name" value="NUCLEOID-ASSOCIATED PROTEIN YBAB"/>
    <property type="match status" value="1"/>
</dbReference>
<dbReference type="PANTHER" id="PTHR33449:SF1">
    <property type="entry name" value="NUCLEOID-ASSOCIATED PROTEIN YBAB"/>
    <property type="match status" value="1"/>
</dbReference>
<dbReference type="Pfam" id="PF02575">
    <property type="entry name" value="YbaB_DNA_bd"/>
    <property type="match status" value="1"/>
</dbReference>
<dbReference type="PIRSF" id="PIRSF004555">
    <property type="entry name" value="UCP004555"/>
    <property type="match status" value="1"/>
</dbReference>
<dbReference type="SUPFAM" id="SSF82607">
    <property type="entry name" value="YbaB-like"/>
    <property type="match status" value="1"/>
</dbReference>
<reference key="1">
    <citation type="submission" date="2008-04" db="EMBL/GenBank/DDBJ databases">
        <title>Complete sequence of chromosome 1 of Burkholderia ambifaria MC40-6.</title>
        <authorList>
            <person name="Copeland A."/>
            <person name="Lucas S."/>
            <person name="Lapidus A."/>
            <person name="Glavina del Rio T."/>
            <person name="Dalin E."/>
            <person name="Tice H."/>
            <person name="Pitluck S."/>
            <person name="Chain P."/>
            <person name="Malfatti S."/>
            <person name="Shin M."/>
            <person name="Vergez L."/>
            <person name="Lang D."/>
            <person name="Schmutz J."/>
            <person name="Larimer F."/>
            <person name="Land M."/>
            <person name="Hauser L."/>
            <person name="Kyrpides N."/>
            <person name="Lykidis A."/>
            <person name="Ramette A."/>
            <person name="Konstantinidis K."/>
            <person name="Tiedje J."/>
            <person name="Richardson P."/>
        </authorList>
    </citation>
    <scope>NUCLEOTIDE SEQUENCE [LARGE SCALE GENOMIC DNA]</scope>
    <source>
        <strain>MC40-6</strain>
    </source>
</reference>